<dbReference type="EC" id="1.8.4.11"/>
<dbReference type="EC" id="1.8.4.12"/>
<dbReference type="EMBL" id="CP000003">
    <property type="protein sequence ID" value="AAT87438.1"/>
    <property type="status" value="ALT_INIT"/>
    <property type="molecule type" value="Genomic_DNA"/>
</dbReference>
<dbReference type="SMR" id="Q5XAX5"/>
<dbReference type="KEGG" id="spa:M6_Spy1303"/>
<dbReference type="HOGENOM" id="CLU_031040_1_1_9"/>
<dbReference type="Proteomes" id="UP000001167">
    <property type="component" value="Chromosome"/>
</dbReference>
<dbReference type="GO" id="GO:0005737">
    <property type="term" value="C:cytoplasm"/>
    <property type="evidence" value="ECO:0007669"/>
    <property type="project" value="TreeGrafter"/>
</dbReference>
<dbReference type="GO" id="GO:0033744">
    <property type="term" value="F:L-methionine:thioredoxin-disulfide S-oxidoreductase activity"/>
    <property type="evidence" value="ECO:0007669"/>
    <property type="project" value="RHEA"/>
</dbReference>
<dbReference type="GO" id="GO:0033743">
    <property type="term" value="F:peptide-methionine (R)-S-oxide reductase activity"/>
    <property type="evidence" value="ECO:0007669"/>
    <property type="project" value="UniProtKB-UniRule"/>
</dbReference>
<dbReference type="GO" id="GO:0008113">
    <property type="term" value="F:peptide-methionine (S)-S-oxide reductase activity"/>
    <property type="evidence" value="ECO:0007669"/>
    <property type="project" value="UniProtKB-UniRule"/>
</dbReference>
<dbReference type="GO" id="GO:0036211">
    <property type="term" value="P:protein modification process"/>
    <property type="evidence" value="ECO:0007669"/>
    <property type="project" value="UniProtKB-UniRule"/>
</dbReference>
<dbReference type="GO" id="GO:0030091">
    <property type="term" value="P:protein repair"/>
    <property type="evidence" value="ECO:0007669"/>
    <property type="project" value="InterPro"/>
</dbReference>
<dbReference type="GO" id="GO:0006979">
    <property type="term" value="P:response to oxidative stress"/>
    <property type="evidence" value="ECO:0007669"/>
    <property type="project" value="InterPro"/>
</dbReference>
<dbReference type="FunFam" id="3.30.1060.10:FF:000007">
    <property type="entry name" value="Peptide methionine sulfoxide reductase msrA/msrB"/>
    <property type="match status" value="1"/>
</dbReference>
<dbReference type="FunFam" id="2.170.150.20:FF:000003">
    <property type="entry name" value="Peptide methionine sulfoxide reductase MsrB"/>
    <property type="match status" value="1"/>
</dbReference>
<dbReference type="Gene3D" id="2.170.150.20">
    <property type="entry name" value="Peptide methionine sulfoxide reductase"/>
    <property type="match status" value="1"/>
</dbReference>
<dbReference type="Gene3D" id="3.30.1060.10">
    <property type="entry name" value="Peptide methionine sulphoxide reductase MsrA"/>
    <property type="match status" value="1"/>
</dbReference>
<dbReference type="HAMAP" id="MF_01401">
    <property type="entry name" value="MsrA"/>
    <property type="match status" value="1"/>
</dbReference>
<dbReference type="HAMAP" id="MF_01400">
    <property type="entry name" value="MsrB"/>
    <property type="match status" value="1"/>
</dbReference>
<dbReference type="InterPro" id="IPR002569">
    <property type="entry name" value="Met_Sox_Rdtase_MsrA_dom"/>
</dbReference>
<dbReference type="InterPro" id="IPR036509">
    <property type="entry name" value="Met_Sox_Rdtase_MsrA_sf"/>
</dbReference>
<dbReference type="InterPro" id="IPR028427">
    <property type="entry name" value="Met_Sox_Rdtase_MsrB"/>
</dbReference>
<dbReference type="InterPro" id="IPR002579">
    <property type="entry name" value="Met_Sox_Rdtase_MsrB_dom"/>
</dbReference>
<dbReference type="InterPro" id="IPR011057">
    <property type="entry name" value="Mss4-like_sf"/>
</dbReference>
<dbReference type="NCBIfam" id="TIGR00401">
    <property type="entry name" value="msrA"/>
    <property type="match status" value="1"/>
</dbReference>
<dbReference type="NCBIfam" id="TIGR00357">
    <property type="entry name" value="peptide-methionine (R)-S-oxide reductase MsrB"/>
    <property type="match status" value="1"/>
</dbReference>
<dbReference type="PANTHER" id="PTHR10173">
    <property type="entry name" value="METHIONINE SULFOXIDE REDUCTASE"/>
    <property type="match status" value="1"/>
</dbReference>
<dbReference type="PANTHER" id="PTHR10173:SF59">
    <property type="entry name" value="PEPTIDE METHIONINE SULFOXIDE REDUCTASE MSRA_MSRB"/>
    <property type="match status" value="1"/>
</dbReference>
<dbReference type="Pfam" id="PF01625">
    <property type="entry name" value="PMSR"/>
    <property type="match status" value="1"/>
</dbReference>
<dbReference type="Pfam" id="PF01641">
    <property type="entry name" value="SelR"/>
    <property type="match status" value="1"/>
</dbReference>
<dbReference type="SUPFAM" id="SSF51316">
    <property type="entry name" value="Mss4-like"/>
    <property type="match status" value="1"/>
</dbReference>
<dbReference type="SUPFAM" id="SSF55068">
    <property type="entry name" value="Peptide methionine sulfoxide reductase"/>
    <property type="match status" value="1"/>
</dbReference>
<dbReference type="PROSITE" id="PS51790">
    <property type="entry name" value="MSRB"/>
    <property type="match status" value="1"/>
</dbReference>
<feature type="chain" id="PRO_0000138523" description="Peptide methionine sulfoxide reductase MsrA/MsrB">
    <location>
        <begin position="1"/>
        <end position="309"/>
    </location>
</feature>
<feature type="domain" description="MsrB" evidence="2">
    <location>
        <begin position="170"/>
        <end position="293"/>
    </location>
</feature>
<feature type="region of interest" description="Peptide methionine sulfoxide reductase A">
    <location>
        <begin position="1"/>
        <end position="153"/>
    </location>
</feature>
<feature type="active site" evidence="1">
    <location>
        <position position="8"/>
    </location>
</feature>
<feature type="active site" description="Nucleophile" evidence="2">
    <location>
        <position position="282"/>
    </location>
</feature>
<organism>
    <name type="scientific">Streptococcus pyogenes serotype M6 (strain ATCC BAA-946 / MGAS10394)</name>
    <dbReference type="NCBI Taxonomy" id="286636"/>
    <lineage>
        <taxon>Bacteria</taxon>
        <taxon>Bacillati</taxon>
        <taxon>Bacillota</taxon>
        <taxon>Bacilli</taxon>
        <taxon>Lactobacillales</taxon>
        <taxon>Streptococcaceae</taxon>
        <taxon>Streptococcus</taxon>
    </lineage>
</organism>
<protein>
    <recommendedName>
        <fullName>Peptide methionine sulfoxide reductase MsrA/MsrB</fullName>
    </recommendedName>
    <domain>
        <recommendedName>
            <fullName>Peptide methionine sulfoxide reductase MsrA</fullName>
            <shortName>Protein-methionine-S-oxide reductase</shortName>
            <ecNumber>1.8.4.11</ecNumber>
        </recommendedName>
        <alternativeName>
            <fullName>Peptide-methionine (S)-S-oxide reductase</fullName>
            <shortName>Peptide Met(O) reductase</shortName>
        </alternativeName>
    </domain>
    <domain>
        <recommendedName>
            <fullName>Peptide methionine sulfoxide reductase MsrB</fullName>
            <ecNumber>1.8.4.12</ecNumber>
        </recommendedName>
        <alternativeName>
            <fullName>Peptide-methionine (R)-S-oxide reductase</fullName>
        </alternativeName>
    </domain>
</protein>
<evidence type="ECO:0000250" key="1"/>
<evidence type="ECO:0000255" key="2">
    <source>
        <dbReference type="PROSITE-ProRule" id="PRU01126"/>
    </source>
</evidence>
<evidence type="ECO:0000305" key="3"/>
<keyword id="KW-0511">Multifunctional enzyme</keyword>
<keyword id="KW-0560">Oxidoreductase</keyword>
<name>MSRAB_STRP6</name>
<gene>
    <name type="primary">msrAB</name>
    <name type="ordered locus">M6_Spy1303</name>
</gene>
<proteinExistence type="inferred from homology"/>
<reference key="1">
    <citation type="journal article" date="2004" name="J. Infect. Dis.">
        <title>Progress toward characterization of the group A Streptococcus metagenome: complete genome sequence of a macrolide-resistant serotype M6 strain.</title>
        <authorList>
            <person name="Banks D.J."/>
            <person name="Porcella S.F."/>
            <person name="Barbian K.D."/>
            <person name="Beres S.B."/>
            <person name="Philips L.E."/>
            <person name="Voyich J.M."/>
            <person name="DeLeo F.R."/>
            <person name="Martin J.M."/>
            <person name="Somerville G.A."/>
            <person name="Musser J.M."/>
        </authorList>
    </citation>
    <scope>NUCLEOTIDE SEQUENCE [LARGE SCALE GENOMIC DNA]</scope>
    <source>
        <strain>ATCC BAA-946 / MGAS10394</strain>
    </source>
</reference>
<comment type="function">
    <text evidence="1">Has an important function as a repair enzyme for proteins that have been inactivated by oxidation. Catalyzes the reversible oxidation-reduction of methionine sulfoxide in proteins to methionine (By similarity).</text>
</comment>
<comment type="catalytic activity">
    <reaction>
        <text>L-methionyl-[protein] + [thioredoxin]-disulfide + H2O = L-methionyl-(S)-S-oxide-[protein] + [thioredoxin]-dithiol</text>
        <dbReference type="Rhea" id="RHEA:14217"/>
        <dbReference type="Rhea" id="RHEA-COMP:10698"/>
        <dbReference type="Rhea" id="RHEA-COMP:10700"/>
        <dbReference type="Rhea" id="RHEA-COMP:12313"/>
        <dbReference type="Rhea" id="RHEA-COMP:12315"/>
        <dbReference type="ChEBI" id="CHEBI:15377"/>
        <dbReference type="ChEBI" id="CHEBI:16044"/>
        <dbReference type="ChEBI" id="CHEBI:29950"/>
        <dbReference type="ChEBI" id="CHEBI:44120"/>
        <dbReference type="ChEBI" id="CHEBI:50058"/>
        <dbReference type="EC" id="1.8.4.11"/>
    </reaction>
</comment>
<comment type="catalytic activity">
    <reaction>
        <text>[thioredoxin]-disulfide + L-methionine + H2O = L-methionine (S)-S-oxide + [thioredoxin]-dithiol</text>
        <dbReference type="Rhea" id="RHEA:19993"/>
        <dbReference type="Rhea" id="RHEA-COMP:10698"/>
        <dbReference type="Rhea" id="RHEA-COMP:10700"/>
        <dbReference type="ChEBI" id="CHEBI:15377"/>
        <dbReference type="ChEBI" id="CHEBI:29950"/>
        <dbReference type="ChEBI" id="CHEBI:50058"/>
        <dbReference type="ChEBI" id="CHEBI:57844"/>
        <dbReference type="ChEBI" id="CHEBI:58772"/>
        <dbReference type="EC" id="1.8.4.11"/>
    </reaction>
</comment>
<comment type="catalytic activity">
    <reaction>
        <text>L-methionyl-[protein] + [thioredoxin]-disulfide + H2O = L-methionyl-(R)-S-oxide-[protein] + [thioredoxin]-dithiol</text>
        <dbReference type="Rhea" id="RHEA:24164"/>
        <dbReference type="Rhea" id="RHEA-COMP:10698"/>
        <dbReference type="Rhea" id="RHEA-COMP:10700"/>
        <dbReference type="Rhea" id="RHEA-COMP:12313"/>
        <dbReference type="Rhea" id="RHEA-COMP:12314"/>
        <dbReference type="ChEBI" id="CHEBI:15377"/>
        <dbReference type="ChEBI" id="CHEBI:16044"/>
        <dbReference type="ChEBI" id="CHEBI:29950"/>
        <dbReference type="ChEBI" id="CHEBI:45764"/>
        <dbReference type="ChEBI" id="CHEBI:50058"/>
        <dbReference type="EC" id="1.8.4.12"/>
    </reaction>
</comment>
<comment type="similarity">
    <text evidence="3">In the N-terminal section; belongs to the MsrA Met sulfoxide reductase family.</text>
</comment>
<comment type="similarity">
    <text evidence="3">In the C-terminal section; belongs to the MsrB Met sulfoxide reductase family.</text>
</comment>
<comment type="sequence caution" evidence="3">
    <conflict type="erroneous initiation">
        <sequence resource="EMBL-CDS" id="AAT87438"/>
    </conflict>
</comment>
<accession>Q5XAX5</accession>
<sequence length="309" mass="35103">MIYLAGGCFWGVEEYFSQVDGVLDAVSGYANGRGDTTNYQLIHQTGHAETVEVAYDANRISLKELLLHFFRIIDPTSLNKQGNDRGSQYRTGIYYTDKADLAIIDEVFKEKAKDYKKKIVVEKAPLKHFIKAEDYHQDYLKKNPNGYCHIDINQATYPVIDESKYPKPSATEIKEKLSADEYRVTQKNETEKAFSNRYWDSFDAGIYVDVVTGEPLFSSKDKFESGCGWPSFSRPISPDVVRYKEDKSFNMTRTEVRSRSGNSHLGHVFTDGPKDQGGLRYCINSLSITFIPKADMEAKGYGYLLSSVE</sequence>